<dbReference type="EC" id="2.1.1.178" evidence="1"/>
<dbReference type="EMBL" id="AP009240">
    <property type="protein sequence ID" value="BAG77534.1"/>
    <property type="status" value="ALT_INIT"/>
    <property type="molecule type" value="Genomic_DNA"/>
</dbReference>
<dbReference type="RefSeq" id="WP_001307251.1">
    <property type="nucleotide sequence ID" value="NC_011415.1"/>
</dbReference>
<dbReference type="SMR" id="B6IBR3"/>
<dbReference type="KEGG" id="ecy:ECSE_2010"/>
<dbReference type="HOGENOM" id="CLU_005316_6_2_6"/>
<dbReference type="Proteomes" id="UP000008199">
    <property type="component" value="Chromosome"/>
</dbReference>
<dbReference type="GO" id="GO:0005737">
    <property type="term" value="C:cytoplasm"/>
    <property type="evidence" value="ECO:0007669"/>
    <property type="project" value="UniProtKB-SubCell"/>
</dbReference>
<dbReference type="GO" id="GO:0003723">
    <property type="term" value="F:RNA binding"/>
    <property type="evidence" value="ECO:0007669"/>
    <property type="project" value="UniProtKB-KW"/>
</dbReference>
<dbReference type="GO" id="GO:0009383">
    <property type="term" value="F:rRNA (cytosine-C5-)-methyltransferase activity"/>
    <property type="evidence" value="ECO:0007669"/>
    <property type="project" value="TreeGrafter"/>
</dbReference>
<dbReference type="GO" id="GO:0070475">
    <property type="term" value="P:rRNA base methylation"/>
    <property type="evidence" value="ECO:0007669"/>
    <property type="project" value="TreeGrafter"/>
</dbReference>
<dbReference type="CDD" id="cd02440">
    <property type="entry name" value="AdoMet_MTases"/>
    <property type="match status" value="1"/>
</dbReference>
<dbReference type="FunFam" id="3.10.450.720:FF:000001">
    <property type="entry name" value="Ribosomal RNA small subunit methyltransferase F"/>
    <property type="match status" value="1"/>
</dbReference>
<dbReference type="FunFam" id="3.40.50.150:FF:000079">
    <property type="entry name" value="Ribosomal RNA small subunit methyltransferase F"/>
    <property type="match status" value="1"/>
</dbReference>
<dbReference type="Gene3D" id="3.10.450.720">
    <property type="match status" value="1"/>
</dbReference>
<dbReference type="Gene3D" id="3.40.50.150">
    <property type="entry name" value="Vaccinia Virus protein VP39"/>
    <property type="match status" value="1"/>
</dbReference>
<dbReference type="HAMAP" id="MF_01579">
    <property type="entry name" value="16SrRNA_methyltr_F"/>
    <property type="match status" value="1"/>
</dbReference>
<dbReference type="InterPro" id="IPR031341">
    <property type="entry name" value="Methyltr_RsmF_N"/>
</dbReference>
<dbReference type="InterPro" id="IPR049560">
    <property type="entry name" value="MeTrfase_RsmB-F_NOP2_cat"/>
</dbReference>
<dbReference type="InterPro" id="IPR001678">
    <property type="entry name" value="MeTrfase_RsmB-F_NOP2_dom"/>
</dbReference>
<dbReference type="InterPro" id="IPR027391">
    <property type="entry name" value="Nol1_Nop2_Fmu_2"/>
</dbReference>
<dbReference type="InterPro" id="IPR011023">
    <property type="entry name" value="Nop2p"/>
</dbReference>
<dbReference type="InterPro" id="IPR023267">
    <property type="entry name" value="RCMT"/>
</dbReference>
<dbReference type="InterPro" id="IPR023545">
    <property type="entry name" value="rRNA_ssu_MeTfrase_F"/>
</dbReference>
<dbReference type="InterPro" id="IPR018314">
    <property type="entry name" value="RsmB/NOL1/NOP2-like_CS"/>
</dbReference>
<dbReference type="InterPro" id="IPR029063">
    <property type="entry name" value="SAM-dependent_MTases_sf"/>
</dbReference>
<dbReference type="InterPro" id="IPR048457">
    <property type="entry name" value="YebU_pre-PUA_dom"/>
</dbReference>
<dbReference type="NCBIfam" id="TIGR00446">
    <property type="entry name" value="nop2p"/>
    <property type="match status" value="1"/>
</dbReference>
<dbReference type="NCBIfam" id="NF008898">
    <property type="entry name" value="PRK11933.1"/>
    <property type="match status" value="1"/>
</dbReference>
<dbReference type="PANTHER" id="PTHR22807:SF30">
    <property type="entry name" value="28S RRNA (CYTOSINE(4447)-C(5))-METHYLTRANSFERASE-RELATED"/>
    <property type="match status" value="1"/>
</dbReference>
<dbReference type="PANTHER" id="PTHR22807">
    <property type="entry name" value="NOP2 YEAST -RELATED NOL1/NOP2/FMU SUN DOMAIN-CONTAINING"/>
    <property type="match status" value="1"/>
</dbReference>
<dbReference type="Pfam" id="PF01189">
    <property type="entry name" value="Methyltr_RsmB-F"/>
    <property type="match status" value="1"/>
</dbReference>
<dbReference type="Pfam" id="PF17125">
    <property type="entry name" value="Methyltr_RsmF_N"/>
    <property type="match status" value="1"/>
</dbReference>
<dbReference type="Pfam" id="PF13636">
    <property type="entry name" value="Methyltranf_PUA"/>
    <property type="match status" value="1"/>
</dbReference>
<dbReference type="Pfam" id="PF21150">
    <property type="entry name" value="YebU_pre-PUA_dom"/>
    <property type="match status" value="1"/>
</dbReference>
<dbReference type="PRINTS" id="PR02008">
    <property type="entry name" value="RCMTFAMILY"/>
</dbReference>
<dbReference type="SUPFAM" id="SSF53335">
    <property type="entry name" value="S-adenosyl-L-methionine-dependent methyltransferases"/>
    <property type="match status" value="1"/>
</dbReference>
<dbReference type="PROSITE" id="PS01153">
    <property type="entry name" value="NOL1_NOP2_SUN"/>
    <property type="match status" value="1"/>
</dbReference>
<dbReference type="PROSITE" id="PS51686">
    <property type="entry name" value="SAM_MT_RSMB_NOP"/>
    <property type="match status" value="1"/>
</dbReference>
<protein>
    <recommendedName>
        <fullName evidence="1">Ribosomal RNA small subunit methyltransferase F</fullName>
        <ecNumber evidence="1">2.1.1.178</ecNumber>
    </recommendedName>
    <alternativeName>
        <fullName evidence="1">16S rRNA m5C1407 methyltransferase</fullName>
    </alternativeName>
    <alternativeName>
        <fullName evidence="1">rRNA (cytosine-C(5)-)-methyltransferase RsmF</fullName>
    </alternativeName>
</protein>
<reference key="1">
    <citation type="journal article" date="2008" name="DNA Res.">
        <title>Complete genome sequence and comparative analysis of the wild-type commensal Escherichia coli strain SE11 isolated from a healthy adult.</title>
        <authorList>
            <person name="Oshima K."/>
            <person name="Toh H."/>
            <person name="Ogura Y."/>
            <person name="Sasamoto H."/>
            <person name="Morita H."/>
            <person name="Park S.-H."/>
            <person name="Ooka T."/>
            <person name="Iyoda S."/>
            <person name="Taylor T.D."/>
            <person name="Hayashi T."/>
            <person name="Itoh K."/>
            <person name="Hattori M."/>
        </authorList>
    </citation>
    <scope>NUCLEOTIDE SEQUENCE [LARGE SCALE GENOMIC DNA]</scope>
    <source>
        <strain>SE11</strain>
    </source>
</reference>
<feature type="chain" id="PRO_0000382573" description="Ribosomal RNA small subunit methyltransferase F">
    <location>
        <begin position="1"/>
        <end position="479"/>
    </location>
</feature>
<feature type="active site" description="Nucleophile" evidence="1">
    <location>
        <position position="247"/>
    </location>
</feature>
<feature type="binding site" evidence="1">
    <location>
        <begin position="125"/>
        <end position="131"/>
    </location>
    <ligand>
        <name>S-adenosyl-L-methionine</name>
        <dbReference type="ChEBI" id="CHEBI:59789"/>
    </ligand>
</feature>
<feature type="binding site" evidence="1">
    <location>
        <position position="149"/>
    </location>
    <ligand>
        <name>S-adenosyl-L-methionine</name>
        <dbReference type="ChEBI" id="CHEBI:59789"/>
    </ligand>
</feature>
<feature type="binding site" evidence="1">
    <location>
        <position position="176"/>
    </location>
    <ligand>
        <name>S-adenosyl-L-methionine</name>
        <dbReference type="ChEBI" id="CHEBI:59789"/>
    </ligand>
</feature>
<feature type="binding site" evidence="1">
    <location>
        <position position="194"/>
    </location>
    <ligand>
        <name>S-adenosyl-L-methionine</name>
        <dbReference type="ChEBI" id="CHEBI:59789"/>
    </ligand>
</feature>
<comment type="function">
    <text evidence="1">Specifically methylates the cytosine at position 1407 (m5C1407) of 16S rRNA.</text>
</comment>
<comment type="catalytic activity">
    <reaction evidence="1">
        <text>cytidine(1407) in 16S rRNA + S-adenosyl-L-methionine = 5-methylcytidine(1407) in 16S rRNA + S-adenosyl-L-homocysteine + H(+)</text>
        <dbReference type="Rhea" id="RHEA:42756"/>
        <dbReference type="Rhea" id="RHEA-COMP:10223"/>
        <dbReference type="Rhea" id="RHEA-COMP:10224"/>
        <dbReference type="ChEBI" id="CHEBI:15378"/>
        <dbReference type="ChEBI" id="CHEBI:57856"/>
        <dbReference type="ChEBI" id="CHEBI:59789"/>
        <dbReference type="ChEBI" id="CHEBI:74483"/>
        <dbReference type="ChEBI" id="CHEBI:82748"/>
        <dbReference type="EC" id="2.1.1.178"/>
    </reaction>
</comment>
<comment type="subcellular location">
    <subcellularLocation>
        <location evidence="1">Cytoplasm</location>
    </subcellularLocation>
</comment>
<comment type="similarity">
    <text evidence="1">Belongs to the class I-like SAM-binding methyltransferase superfamily. RsmB/NOP family.</text>
</comment>
<comment type="sequence caution" evidence="2">
    <conflict type="erroneous initiation">
        <sequence resource="EMBL-CDS" id="BAG77534"/>
    </conflict>
</comment>
<organism>
    <name type="scientific">Escherichia coli (strain SE11)</name>
    <dbReference type="NCBI Taxonomy" id="409438"/>
    <lineage>
        <taxon>Bacteria</taxon>
        <taxon>Pseudomonadati</taxon>
        <taxon>Pseudomonadota</taxon>
        <taxon>Gammaproteobacteria</taxon>
        <taxon>Enterobacterales</taxon>
        <taxon>Enterobacteriaceae</taxon>
        <taxon>Escherichia</taxon>
    </lineage>
</organism>
<gene>
    <name evidence="1" type="primary">rsmF</name>
    <name type="ordered locus">ECSE_2010</name>
</gene>
<evidence type="ECO:0000255" key="1">
    <source>
        <dbReference type="HAMAP-Rule" id="MF_01579"/>
    </source>
</evidence>
<evidence type="ECO:0000305" key="2"/>
<name>RSMF_ECOSE</name>
<keyword id="KW-0963">Cytoplasm</keyword>
<keyword id="KW-0489">Methyltransferase</keyword>
<keyword id="KW-0694">RNA-binding</keyword>
<keyword id="KW-0698">rRNA processing</keyword>
<keyword id="KW-0949">S-adenosyl-L-methionine</keyword>
<keyword id="KW-0808">Transferase</keyword>
<sequence length="479" mass="53240">MAQHTVYFPDAFLTQMREAMPSTLSFDDFLAACQRPLRRSIRVNTLKISVADFLQLTAPYGWTLTPIPWCEEGFWIERDNEDALPLGSTAEHLSGLFYIQEASSMLPVAALFADDNAPQRVMDVAAAPGSKTTQIAARMNNEGAILANEFSASRVKVLHANISRCGISNVALTHFDGRVFGAAVPEMFDAILLDAPCSGEGVVRKDPDALKNWSPESNQEIAATQRELIDSAFHALRPGGTLVYSTCTLNQEENEAVCLWLKETYPDAVEFLPLGDLFPGANKALTEEGFLHVFPQIYDCEGFFVARLRKTQAIPALPAPKYKVGNFPFSPVKDREAGQIRQAAAGVGLNWDENLRLWQRDKELWLFPVGIEALIGKVRFSRLGIKLAETHNKGYRWQHEAVIALASPDNMNAFELTPQEAEEWYRGRDVYPQAAPVADDVLVTFQHQPIGLAKRIGSRLKNSYPRELVRDGKLFTGNA</sequence>
<proteinExistence type="inferred from homology"/>
<accession>B6IBR3</accession>